<feature type="chain" id="PRO_1000191795" description="Transcriptional repressor NrdR">
    <location>
        <begin position="1"/>
        <end position="149"/>
    </location>
</feature>
<feature type="domain" description="ATP-cone" evidence="1">
    <location>
        <begin position="49"/>
        <end position="139"/>
    </location>
</feature>
<feature type="zinc finger region" evidence="1">
    <location>
        <begin position="3"/>
        <end position="34"/>
    </location>
</feature>
<protein>
    <recommendedName>
        <fullName evidence="1">Transcriptional repressor NrdR</fullName>
    </recommendedName>
</protein>
<proteinExistence type="inferred from homology"/>
<reference key="1">
    <citation type="journal article" date="2009" name="PLoS Genet.">
        <title>Organised genome dynamics in the Escherichia coli species results in highly diverse adaptive paths.</title>
        <authorList>
            <person name="Touchon M."/>
            <person name="Hoede C."/>
            <person name="Tenaillon O."/>
            <person name="Barbe V."/>
            <person name="Baeriswyl S."/>
            <person name="Bidet P."/>
            <person name="Bingen E."/>
            <person name="Bonacorsi S."/>
            <person name="Bouchier C."/>
            <person name="Bouvet O."/>
            <person name="Calteau A."/>
            <person name="Chiapello H."/>
            <person name="Clermont O."/>
            <person name="Cruveiller S."/>
            <person name="Danchin A."/>
            <person name="Diard M."/>
            <person name="Dossat C."/>
            <person name="Karoui M.E."/>
            <person name="Frapy E."/>
            <person name="Garry L."/>
            <person name="Ghigo J.M."/>
            <person name="Gilles A.M."/>
            <person name="Johnson J."/>
            <person name="Le Bouguenec C."/>
            <person name="Lescat M."/>
            <person name="Mangenot S."/>
            <person name="Martinez-Jehanne V."/>
            <person name="Matic I."/>
            <person name="Nassif X."/>
            <person name="Oztas S."/>
            <person name="Petit M.A."/>
            <person name="Pichon C."/>
            <person name="Rouy Z."/>
            <person name="Ruf C.S."/>
            <person name="Schneider D."/>
            <person name="Tourret J."/>
            <person name="Vacherie B."/>
            <person name="Vallenet D."/>
            <person name="Medigue C."/>
            <person name="Rocha E.P.C."/>
            <person name="Denamur E."/>
        </authorList>
    </citation>
    <scope>NUCLEOTIDE SEQUENCE [LARGE SCALE GENOMIC DNA]</scope>
    <source>
        <strain>55989 / EAEC</strain>
    </source>
</reference>
<dbReference type="EMBL" id="CU928145">
    <property type="protein sequence ID" value="CAU96297.1"/>
    <property type="molecule type" value="Genomic_DNA"/>
</dbReference>
<dbReference type="RefSeq" id="WP_000543535.1">
    <property type="nucleotide sequence ID" value="NZ_CP028304.1"/>
</dbReference>
<dbReference type="SMR" id="B7L647"/>
<dbReference type="GeneID" id="93777047"/>
<dbReference type="KEGG" id="eck:EC55989_0423"/>
<dbReference type="HOGENOM" id="CLU_108412_0_0_6"/>
<dbReference type="Proteomes" id="UP000000746">
    <property type="component" value="Chromosome"/>
</dbReference>
<dbReference type="GO" id="GO:0005524">
    <property type="term" value="F:ATP binding"/>
    <property type="evidence" value="ECO:0007669"/>
    <property type="project" value="UniProtKB-KW"/>
</dbReference>
<dbReference type="GO" id="GO:0003677">
    <property type="term" value="F:DNA binding"/>
    <property type="evidence" value="ECO:0007669"/>
    <property type="project" value="UniProtKB-KW"/>
</dbReference>
<dbReference type="GO" id="GO:0008270">
    <property type="term" value="F:zinc ion binding"/>
    <property type="evidence" value="ECO:0007669"/>
    <property type="project" value="UniProtKB-UniRule"/>
</dbReference>
<dbReference type="GO" id="GO:0045892">
    <property type="term" value="P:negative regulation of DNA-templated transcription"/>
    <property type="evidence" value="ECO:0007669"/>
    <property type="project" value="UniProtKB-UniRule"/>
</dbReference>
<dbReference type="HAMAP" id="MF_00440">
    <property type="entry name" value="NrdR"/>
    <property type="match status" value="1"/>
</dbReference>
<dbReference type="InterPro" id="IPR005144">
    <property type="entry name" value="ATP-cone_dom"/>
</dbReference>
<dbReference type="InterPro" id="IPR055173">
    <property type="entry name" value="NrdR-like_N"/>
</dbReference>
<dbReference type="InterPro" id="IPR003796">
    <property type="entry name" value="RNR_NrdR-like"/>
</dbReference>
<dbReference type="NCBIfam" id="TIGR00244">
    <property type="entry name" value="transcriptional regulator NrdR"/>
    <property type="match status" value="1"/>
</dbReference>
<dbReference type="PANTHER" id="PTHR30455">
    <property type="entry name" value="TRANSCRIPTIONAL REPRESSOR NRDR"/>
    <property type="match status" value="1"/>
</dbReference>
<dbReference type="PANTHER" id="PTHR30455:SF2">
    <property type="entry name" value="TRANSCRIPTIONAL REPRESSOR NRDR"/>
    <property type="match status" value="1"/>
</dbReference>
<dbReference type="Pfam" id="PF03477">
    <property type="entry name" value="ATP-cone"/>
    <property type="match status" value="1"/>
</dbReference>
<dbReference type="Pfam" id="PF22811">
    <property type="entry name" value="Zn_ribbon_NrdR"/>
    <property type="match status" value="1"/>
</dbReference>
<dbReference type="PROSITE" id="PS51161">
    <property type="entry name" value="ATP_CONE"/>
    <property type="match status" value="1"/>
</dbReference>
<evidence type="ECO:0000255" key="1">
    <source>
        <dbReference type="HAMAP-Rule" id="MF_00440"/>
    </source>
</evidence>
<name>NRDR_ECO55</name>
<accession>B7L647</accession>
<sequence length="149" mass="17229">MHCPFCFAVDTKVIDSRLVGEGSSVRRRRQCLVCNERFTTFEVAELVMPRVVKSNDVREPFNEEKLRSGMLRALEKRPVSSDDVEMAINHIKSQLRATGEREVPSKMIGNLVMEQLKKLDKVAYIRFASVYRSFEDIKEFGEEIARLED</sequence>
<organism>
    <name type="scientific">Escherichia coli (strain 55989 / EAEC)</name>
    <dbReference type="NCBI Taxonomy" id="585055"/>
    <lineage>
        <taxon>Bacteria</taxon>
        <taxon>Pseudomonadati</taxon>
        <taxon>Pseudomonadota</taxon>
        <taxon>Gammaproteobacteria</taxon>
        <taxon>Enterobacterales</taxon>
        <taxon>Enterobacteriaceae</taxon>
        <taxon>Escherichia</taxon>
    </lineage>
</organism>
<keyword id="KW-0067">ATP-binding</keyword>
<keyword id="KW-0238">DNA-binding</keyword>
<keyword id="KW-0479">Metal-binding</keyword>
<keyword id="KW-0547">Nucleotide-binding</keyword>
<keyword id="KW-1185">Reference proteome</keyword>
<keyword id="KW-0678">Repressor</keyword>
<keyword id="KW-0804">Transcription</keyword>
<keyword id="KW-0805">Transcription regulation</keyword>
<keyword id="KW-0862">Zinc</keyword>
<keyword id="KW-0863">Zinc-finger</keyword>
<gene>
    <name evidence="1" type="primary">nrdR</name>
    <name type="ordered locus">EC55989_0423</name>
</gene>
<comment type="function">
    <text evidence="1">Negatively regulates transcription of bacterial ribonucleotide reductase nrd genes and operons by binding to NrdR-boxes.</text>
</comment>
<comment type="cofactor">
    <cofactor evidence="1">
        <name>Zn(2+)</name>
        <dbReference type="ChEBI" id="CHEBI:29105"/>
    </cofactor>
    <text evidence="1">Binds 1 zinc ion.</text>
</comment>
<comment type="similarity">
    <text evidence="1">Belongs to the NrdR family.</text>
</comment>